<sequence>MSEPASISAGIADRYATAIFEIAAESNALDNLETSINDLAASLADSEDLRTLITSPLVSREEQAAAISAVADKMGLVDVLRNSLALMAAKRRLFVVPALIDALRARIAEARGEVTAEVVSAKALTKTQSEKLAKTLAERVGKKVTINATVDASIIGGLVVKVGSKMIDSSIRSKLNSLQNAMKEVG</sequence>
<proteinExistence type="inferred from homology"/>
<organism>
    <name type="scientific">Ruegeria sp. (strain TM1040)</name>
    <name type="common">Silicibacter sp.</name>
    <dbReference type="NCBI Taxonomy" id="292414"/>
    <lineage>
        <taxon>Bacteria</taxon>
        <taxon>Pseudomonadati</taxon>
        <taxon>Pseudomonadota</taxon>
        <taxon>Alphaproteobacteria</taxon>
        <taxon>Rhodobacterales</taxon>
        <taxon>Roseobacteraceae</taxon>
        <taxon>Ruegeria</taxon>
    </lineage>
</organism>
<reference key="1">
    <citation type="submission" date="2006-05" db="EMBL/GenBank/DDBJ databases">
        <title>Complete sequence of chromosome of Silicibacter sp. TM1040.</title>
        <authorList>
            <consortium name="US DOE Joint Genome Institute"/>
            <person name="Copeland A."/>
            <person name="Lucas S."/>
            <person name="Lapidus A."/>
            <person name="Barry K."/>
            <person name="Detter J.C."/>
            <person name="Glavina del Rio T."/>
            <person name="Hammon N."/>
            <person name="Israni S."/>
            <person name="Dalin E."/>
            <person name="Tice H."/>
            <person name="Pitluck S."/>
            <person name="Brettin T."/>
            <person name="Bruce D."/>
            <person name="Han C."/>
            <person name="Tapia R."/>
            <person name="Goodwin L."/>
            <person name="Thompson L.S."/>
            <person name="Gilna P."/>
            <person name="Schmutz J."/>
            <person name="Larimer F."/>
            <person name="Land M."/>
            <person name="Hauser L."/>
            <person name="Kyrpides N."/>
            <person name="Kim E."/>
            <person name="Belas R."/>
            <person name="Moran M.A."/>
            <person name="Buchan A."/>
            <person name="Gonzalez J.M."/>
            <person name="Schell M.A."/>
            <person name="Sun F."/>
            <person name="Richardson P."/>
        </authorList>
    </citation>
    <scope>NUCLEOTIDE SEQUENCE [LARGE SCALE GENOMIC DNA]</scope>
    <source>
        <strain>TM1040</strain>
    </source>
</reference>
<name>ATPD_RUEST</name>
<gene>
    <name evidence="1" type="primary">atpH</name>
    <name type="ordered locus">TM1040_2089</name>
</gene>
<feature type="chain" id="PRO_0000382150" description="ATP synthase subunit delta">
    <location>
        <begin position="1"/>
        <end position="186"/>
    </location>
</feature>
<keyword id="KW-0066">ATP synthesis</keyword>
<keyword id="KW-0997">Cell inner membrane</keyword>
<keyword id="KW-1003">Cell membrane</keyword>
<keyword id="KW-0139">CF(1)</keyword>
<keyword id="KW-0375">Hydrogen ion transport</keyword>
<keyword id="KW-0406">Ion transport</keyword>
<keyword id="KW-0472">Membrane</keyword>
<keyword id="KW-1185">Reference proteome</keyword>
<keyword id="KW-0813">Transport</keyword>
<evidence type="ECO:0000255" key="1">
    <source>
        <dbReference type="HAMAP-Rule" id="MF_01416"/>
    </source>
</evidence>
<evidence type="ECO:0000305" key="2"/>
<dbReference type="EMBL" id="CP000377">
    <property type="protein sequence ID" value="ABF64821.1"/>
    <property type="status" value="ALT_INIT"/>
    <property type="molecule type" value="Genomic_DNA"/>
</dbReference>
<dbReference type="RefSeq" id="WP_044026841.1">
    <property type="nucleotide sequence ID" value="NC_008044.1"/>
</dbReference>
<dbReference type="SMR" id="Q1GEU5"/>
<dbReference type="STRING" id="292414.TM1040_2089"/>
<dbReference type="DNASU" id="4077840"/>
<dbReference type="KEGG" id="sit:TM1040_2089"/>
<dbReference type="eggNOG" id="COG0712">
    <property type="taxonomic scope" value="Bacteria"/>
</dbReference>
<dbReference type="HOGENOM" id="CLU_085114_0_1_5"/>
<dbReference type="OrthoDB" id="9796185at2"/>
<dbReference type="Proteomes" id="UP000000636">
    <property type="component" value="Chromosome"/>
</dbReference>
<dbReference type="GO" id="GO:0005886">
    <property type="term" value="C:plasma membrane"/>
    <property type="evidence" value="ECO:0007669"/>
    <property type="project" value="UniProtKB-SubCell"/>
</dbReference>
<dbReference type="GO" id="GO:0045259">
    <property type="term" value="C:proton-transporting ATP synthase complex"/>
    <property type="evidence" value="ECO:0007669"/>
    <property type="project" value="UniProtKB-KW"/>
</dbReference>
<dbReference type="GO" id="GO:0046933">
    <property type="term" value="F:proton-transporting ATP synthase activity, rotational mechanism"/>
    <property type="evidence" value="ECO:0007669"/>
    <property type="project" value="UniProtKB-UniRule"/>
</dbReference>
<dbReference type="Gene3D" id="1.10.520.20">
    <property type="entry name" value="N-terminal domain of the delta subunit of the F1F0-ATP synthase"/>
    <property type="match status" value="1"/>
</dbReference>
<dbReference type="HAMAP" id="MF_01416">
    <property type="entry name" value="ATP_synth_delta_bact"/>
    <property type="match status" value="1"/>
</dbReference>
<dbReference type="InterPro" id="IPR026015">
    <property type="entry name" value="ATP_synth_OSCP/delta_N_sf"/>
</dbReference>
<dbReference type="InterPro" id="IPR020781">
    <property type="entry name" value="ATPase_OSCP/d_CS"/>
</dbReference>
<dbReference type="InterPro" id="IPR000711">
    <property type="entry name" value="ATPase_OSCP/dsu"/>
</dbReference>
<dbReference type="NCBIfam" id="TIGR01145">
    <property type="entry name" value="ATP_synt_delta"/>
    <property type="match status" value="1"/>
</dbReference>
<dbReference type="NCBIfam" id="NF004402">
    <property type="entry name" value="PRK05758.2-2"/>
    <property type="match status" value="1"/>
</dbReference>
<dbReference type="NCBIfam" id="NF004406">
    <property type="entry name" value="PRK05758.3-2"/>
    <property type="match status" value="1"/>
</dbReference>
<dbReference type="PANTHER" id="PTHR11910">
    <property type="entry name" value="ATP SYNTHASE DELTA CHAIN"/>
    <property type="match status" value="1"/>
</dbReference>
<dbReference type="Pfam" id="PF00213">
    <property type="entry name" value="OSCP"/>
    <property type="match status" value="1"/>
</dbReference>
<dbReference type="PRINTS" id="PR00125">
    <property type="entry name" value="ATPASEDELTA"/>
</dbReference>
<dbReference type="SUPFAM" id="SSF47928">
    <property type="entry name" value="N-terminal domain of the delta subunit of the F1F0-ATP synthase"/>
    <property type="match status" value="1"/>
</dbReference>
<dbReference type="PROSITE" id="PS00389">
    <property type="entry name" value="ATPASE_DELTA"/>
    <property type="match status" value="1"/>
</dbReference>
<comment type="function">
    <text evidence="1">F(1)F(0) ATP synthase produces ATP from ADP in the presence of a proton or sodium gradient. F-type ATPases consist of two structural domains, F(1) containing the extramembraneous catalytic core and F(0) containing the membrane proton channel, linked together by a central stalk and a peripheral stalk. During catalysis, ATP synthesis in the catalytic domain of F(1) is coupled via a rotary mechanism of the central stalk subunits to proton translocation.</text>
</comment>
<comment type="function">
    <text evidence="1">This protein is part of the stalk that links CF(0) to CF(1). It either transmits conformational changes from CF(0) to CF(1) or is implicated in proton conduction.</text>
</comment>
<comment type="subunit">
    <text evidence="1">F-type ATPases have 2 components, F(1) - the catalytic core - and F(0) - the membrane proton channel. F(1) has five subunits: alpha(3), beta(3), gamma(1), delta(1), epsilon(1). F(0) has three main subunits: a(1), b(2) and c(10-14). The alpha and beta chains form an alternating ring which encloses part of the gamma chain. F(1) is attached to F(0) by a central stalk formed by the gamma and epsilon chains, while a peripheral stalk is formed by the delta and b chains.</text>
</comment>
<comment type="subcellular location">
    <subcellularLocation>
        <location evidence="1">Cell inner membrane</location>
        <topology evidence="1">Peripheral membrane protein</topology>
    </subcellularLocation>
</comment>
<comment type="similarity">
    <text evidence="1">Belongs to the ATPase delta chain family.</text>
</comment>
<comment type="sequence caution" evidence="2">
    <conflict type="erroneous initiation">
        <sequence resource="EMBL-CDS" id="ABF64821"/>
    </conflict>
</comment>
<accession>Q1GEU5</accession>
<protein>
    <recommendedName>
        <fullName evidence="1">ATP synthase subunit delta</fullName>
    </recommendedName>
    <alternativeName>
        <fullName evidence="1">ATP synthase F(1) sector subunit delta</fullName>
    </alternativeName>
    <alternativeName>
        <fullName evidence="1">F-type ATPase subunit delta</fullName>
        <shortName evidence="1">F-ATPase subunit delta</shortName>
    </alternativeName>
</protein>